<reference key="1">
    <citation type="journal article" date="1996" name="Infect. Immun.">
        <title>Isolation, antimicrobial activities, and primary structures of hamster neutrophil defensins.</title>
        <authorList>
            <person name="Mak P."/>
            <person name="Wojcik K."/>
            <person name="Thogersen I.B."/>
            <person name="Dubin A."/>
        </authorList>
    </citation>
    <scope>PROTEIN SEQUENCE</scope>
</reference>
<dbReference type="SMR" id="P81467"/>
<dbReference type="Proteomes" id="UP000189706">
    <property type="component" value="Unplaced"/>
</dbReference>
<dbReference type="GO" id="GO:0005576">
    <property type="term" value="C:extracellular region"/>
    <property type="evidence" value="ECO:0007669"/>
    <property type="project" value="UniProtKB-SubCell"/>
</dbReference>
<dbReference type="GO" id="GO:0042742">
    <property type="term" value="P:defense response to bacterium"/>
    <property type="evidence" value="ECO:0007669"/>
    <property type="project" value="UniProtKB-KW"/>
</dbReference>
<dbReference type="GO" id="GO:0050832">
    <property type="term" value="P:defense response to fungus"/>
    <property type="evidence" value="ECO:0007669"/>
    <property type="project" value="UniProtKB-KW"/>
</dbReference>
<dbReference type="GO" id="GO:0031640">
    <property type="term" value="P:killing of cells of another organism"/>
    <property type="evidence" value="ECO:0007669"/>
    <property type="project" value="UniProtKB-KW"/>
</dbReference>
<dbReference type="InterPro" id="IPR006081">
    <property type="entry name" value="Alpha-defensin_C"/>
</dbReference>
<dbReference type="InterPro" id="IPR006080">
    <property type="entry name" value="Beta/alpha-defensin_C"/>
</dbReference>
<dbReference type="Pfam" id="PF00323">
    <property type="entry name" value="Defensin_1"/>
    <property type="match status" value="1"/>
</dbReference>
<dbReference type="SMART" id="SM00048">
    <property type="entry name" value="DEFSN"/>
    <property type="match status" value="1"/>
</dbReference>
<dbReference type="SUPFAM" id="SSF57392">
    <property type="entry name" value="Defensin-like"/>
    <property type="match status" value="1"/>
</dbReference>
<dbReference type="PROSITE" id="PS00269">
    <property type="entry name" value="DEFENSIN"/>
    <property type="match status" value="1"/>
</dbReference>
<proteinExistence type="evidence at protein level"/>
<evidence type="ECO:0000250" key="1"/>
<evidence type="ECO:0000305" key="2"/>
<accession>P81467</accession>
<keyword id="KW-0044">Antibiotic</keyword>
<keyword id="KW-0929">Antimicrobial</keyword>
<keyword id="KW-0211">Defensin</keyword>
<keyword id="KW-0903">Direct protein sequencing</keyword>
<keyword id="KW-1015">Disulfide bond</keyword>
<keyword id="KW-0295">Fungicide</keyword>
<keyword id="KW-1185">Reference proteome</keyword>
<keyword id="KW-0964">Secreted</keyword>
<sequence length="33" mass="3891">VTCFCRRRGCASRERLIGYCRFGNTIYGLCCRR</sequence>
<name>DEF3_MESAU</name>
<feature type="peptide" id="PRO_0000044716" description="Neutrophil defensin 3">
    <location>
        <begin position="1"/>
        <end position="33"/>
    </location>
</feature>
<feature type="disulfide bond" evidence="1">
    <location>
        <begin position="3"/>
        <end position="31"/>
    </location>
</feature>
<feature type="disulfide bond" evidence="1">
    <location>
        <begin position="5"/>
        <end position="20"/>
    </location>
</feature>
<feature type="disulfide bond" evidence="1">
    <location>
        <begin position="10"/>
        <end position="30"/>
    </location>
</feature>
<protein>
    <recommendedName>
        <fullName>Neutrophil defensin 3</fullName>
    </recommendedName>
    <alternativeName>
        <fullName>HANP-3</fullName>
    </alternativeName>
</protein>
<comment type="function">
    <text>Anti-fungal and bactericidal activity, greater against Gram-positive bacteria.</text>
</comment>
<comment type="subcellular location">
    <subcellularLocation>
        <location>Secreted</location>
    </subcellularLocation>
</comment>
<comment type="similarity">
    <text evidence="2">Belongs to the alpha-defensin family.</text>
</comment>
<organism>
    <name type="scientific">Mesocricetus auratus</name>
    <name type="common">Golden hamster</name>
    <dbReference type="NCBI Taxonomy" id="10036"/>
    <lineage>
        <taxon>Eukaryota</taxon>
        <taxon>Metazoa</taxon>
        <taxon>Chordata</taxon>
        <taxon>Craniata</taxon>
        <taxon>Vertebrata</taxon>
        <taxon>Euteleostomi</taxon>
        <taxon>Mammalia</taxon>
        <taxon>Eutheria</taxon>
        <taxon>Euarchontoglires</taxon>
        <taxon>Glires</taxon>
        <taxon>Rodentia</taxon>
        <taxon>Myomorpha</taxon>
        <taxon>Muroidea</taxon>
        <taxon>Cricetidae</taxon>
        <taxon>Cricetinae</taxon>
        <taxon>Mesocricetus</taxon>
    </lineage>
</organism>